<feature type="chain" id="PRO_1000025051" description="UDP-2,3-diacylglucosamine hydrolase">
    <location>
        <begin position="1"/>
        <end position="240"/>
    </location>
</feature>
<feature type="binding site" evidence="1">
    <location>
        <position position="8"/>
    </location>
    <ligand>
        <name>Mn(2+)</name>
        <dbReference type="ChEBI" id="CHEBI:29035"/>
        <label>1</label>
    </ligand>
</feature>
<feature type="binding site" evidence="1">
    <location>
        <position position="10"/>
    </location>
    <ligand>
        <name>Mn(2+)</name>
        <dbReference type="ChEBI" id="CHEBI:29035"/>
        <label>1</label>
    </ligand>
</feature>
<feature type="binding site" evidence="1">
    <location>
        <position position="41"/>
    </location>
    <ligand>
        <name>Mn(2+)</name>
        <dbReference type="ChEBI" id="CHEBI:29035"/>
        <label>1</label>
    </ligand>
</feature>
<feature type="binding site" evidence="1">
    <location>
        <position position="41"/>
    </location>
    <ligand>
        <name>Mn(2+)</name>
        <dbReference type="ChEBI" id="CHEBI:29035"/>
        <label>2</label>
    </ligand>
</feature>
<feature type="binding site" evidence="1">
    <location>
        <begin position="79"/>
        <end position="80"/>
    </location>
    <ligand>
        <name>substrate</name>
    </ligand>
</feature>
<feature type="binding site" evidence="1">
    <location>
        <position position="79"/>
    </location>
    <ligand>
        <name>Mn(2+)</name>
        <dbReference type="ChEBI" id="CHEBI:29035"/>
        <label>2</label>
    </ligand>
</feature>
<feature type="binding site" evidence="1">
    <location>
        <position position="114"/>
    </location>
    <ligand>
        <name>Mn(2+)</name>
        <dbReference type="ChEBI" id="CHEBI:29035"/>
        <label>2</label>
    </ligand>
</feature>
<feature type="binding site" evidence="1">
    <location>
        <position position="122"/>
    </location>
    <ligand>
        <name>substrate</name>
    </ligand>
</feature>
<feature type="binding site" evidence="1">
    <location>
        <position position="160"/>
    </location>
    <ligand>
        <name>substrate</name>
    </ligand>
</feature>
<feature type="binding site" evidence="1">
    <location>
        <position position="164"/>
    </location>
    <ligand>
        <name>substrate</name>
    </ligand>
</feature>
<feature type="binding site" evidence="1">
    <location>
        <position position="167"/>
    </location>
    <ligand>
        <name>substrate</name>
    </ligand>
</feature>
<feature type="binding site" evidence="1">
    <location>
        <position position="195"/>
    </location>
    <ligand>
        <name>Mn(2+)</name>
        <dbReference type="ChEBI" id="CHEBI:29035"/>
        <label>2</label>
    </ligand>
</feature>
<feature type="binding site" evidence="1">
    <location>
        <position position="195"/>
    </location>
    <ligand>
        <name>substrate</name>
    </ligand>
</feature>
<feature type="binding site" evidence="1">
    <location>
        <position position="197"/>
    </location>
    <ligand>
        <name>Mn(2+)</name>
        <dbReference type="ChEBI" id="CHEBI:29035"/>
        <label>1</label>
    </ligand>
</feature>
<dbReference type="EC" id="3.6.1.54" evidence="1"/>
<dbReference type="EMBL" id="CP000247">
    <property type="protein sequence ID" value="ABG68614.1"/>
    <property type="molecule type" value="Genomic_DNA"/>
</dbReference>
<dbReference type="RefSeq" id="WP_000212245.1">
    <property type="nucleotide sequence ID" value="NC_008253.1"/>
</dbReference>
<dbReference type="SMR" id="Q0TKB7"/>
<dbReference type="KEGG" id="ecp:ECP_0585"/>
<dbReference type="HOGENOM" id="CLU_074586_0_0_6"/>
<dbReference type="UniPathway" id="UPA00359">
    <property type="reaction ID" value="UER00480"/>
</dbReference>
<dbReference type="Proteomes" id="UP000009182">
    <property type="component" value="Chromosome"/>
</dbReference>
<dbReference type="GO" id="GO:0005737">
    <property type="term" value="C:cytoplasm"/>
    <property type="evidence" value="ECO:0007669"/>
    <property type="project" value="InterPro"/>
</dbReference>
<dbReference type="GO" id="GO:0019897">
    <property type="term" value="C:extrinsic component of plasma membrane"/>
    <property type="evidence" value="ECO:0007669"/>
    <property type="project" value="UniProtKB-UniRule"/>
</dbReference>
<dbReference type="GO" id="GO:0030145">
    <property type="term" value="F:manganese ion binding"/>
    <property type="evidence" value="ECO:0007669"/>
    <property type="project" value="UniProtKB-UniRule"/>
</dbReference>
<dbReference type="GO" id="GO:0008758">
    <property type="term" value="F:UDP-2,3-diacylglucosamine hydrolase activity"/>
    <property type="evidence" value="ECO:0007669"/>
    <property type="project" value="UniProtKB-UniRule"/>
</dbReference>
<dbReference type="GO" id="GO:0009245">
    <property type="term" value="P:lipid A biosynthetic process"/>
    <property type="evidence" value="ECO:0007669"/>
    <property type="project" value="UniProtKB-UniRule"/>
</dbReference>
<dbReference type="CDD" id="cd07398">
    <property type="entry name" value="MPP_YbbF-LpxH"/>
    <property type="match status" value="1"/>
</dbReference>
<dbReference type="FunFam" id="3.60.21.10:FF:000012">
    <property type="entry name" value="UDP-2,3-diacylglucosamine hydrolase"/>
    <property type="match status" value="1"/>
</dbReference>
<dbReference type="Gene3D" id="3.60.21.10">
    <property type="match status" value="1"/>
</dbReference>
<dbReference type="HAMAP" id="MF_00575">
    <property type="entry name" value="LpxH"/>
    <property type="match status" value="1"/>
</dbReference>
<dbReference type="InterPro" id="IPR004843">
    <property type="entry name" value="Calcineurin-like_PHP_ApaH"/>
</dbReference>
<dbReference type="InterPro" id="IPR043461">
    <property type="entry name" value="LpxH-like"/>
</dbReference>
<dbReference type="InterPro" id="IPR029052">
    <property type="entry name" value="Metallo-depent_PP-like"/>
</dbReference>
<dbReference type="InterPro" id="IPR010138">
    <property type="entry name" value="UDP-diacylglucosamine_Hdrlase"/>
</dbReference>
<dbReference type="NCBIfam" id="TIGR01854">
    <property type="entry name" value="lipid_A_lpxH"/>
    <property type="match status" value="1"/>
</dbReference>
<dbReference type="NCBIfam" id="NF003743">
    <property type="entry name" value="PRK05340.1"/>
    <property type="match status" value="1"/>
</dbReference>
<dbReference type="PANTHER" id="PTHR34990:SF1">
    <property type="entry name" value="UDP-2,3-DIACYLGLUCOSAMINE HYDROLASE"/>
    <property type="match status" value="1"/>
</dbReference>
<dbReference type="PANTHER" id="PTHR34990">
    <property type="entry name" value="UDP-2,3-DIACYLGLUCOSAMINE HYDROLASE-RELATED"/>
    <property type="match status" value="1"/>
</dbReference>
<dbReference type="Pfam" id="PF00149">
    <property type="entry name" value="Metallophos"/>
    <property type="match status" value="1"/>
</dbReference>
<dbReference type="SUPFAM" id="SSF56300">
    <property type="entry name" value="Metallo-dependent phosphatases"/>
    <property type="match status" value="1"/>
</dbReference>
<protein>
    <recommendedName>
        <fullName evidence="1">UDP-2,3-diacylglucosamine hydrolase</fullName>
        <ecNumber evidence="1">3.6.1.54</ecNumber>
    </recommendedName>
    <alternativeName>
        <fullName evidence="1">UDP-2,3-diacylglucosamine diphosphatase</fullName>
    </alternativeName>
</protein>
<proteinExistence type="inferred from homology"/>
<comment type="function">
    <text evidence="1">Hydrolyzes the pyrophosphate bond of UDP-2,3-diacylglucosamine to yield 2,3-diacylglucosamine 1-phosphate (lipid X) and UMP by catalyzing the attack of water at the alpha-P atom. Involved in the biosynthesis of lipid A, a phosphorylated glycolipid that anchors the lipopolysaccharide to the outer membrane of the cell.</text>
</comment>
<comment type="catalytic activity">
    <reaction evidence="1">
        <text>UDP-2-N,3-O-bis[(3R)-3-hydroxytetradecanoyl]-alpha-D-glucosamine + H2O = 2-N,3-O-bis[(3R)-3-hydroxytetradecanoyl]-alpha-D-glucosaminyl 1-phosphate + UMP + 2 H(+)</text>
        <dbReference type="Rhea" id="RHEA:25213"/>
        <dbReference type="ChEBI" id="CHEBI:15377"/>
        <dbReference type="ChEBI" id="CHEBI:15378"/>
        <dbReference type="ChEBI" id="CHEBI:57865"/>
        <dbReference type="ChEBI" id="CHEBI:57957"/>
        <dbReference type="ChEBI" id="CHEBI:78847"/>
        <dbReference type="EC" id="3.6.1.54"/>
    </reaction>
</comment>
<comment type="cofactor">
    <cofactor evidence="1">
        <name>Mn(2+)</name>
        <dbReference type="ChEBI" id="CHEBI:29035"/>
    </cofactor>
    <text evidence="1">Binds 2 Mn(2+) ions per subunit in a binuclear metal center.</text>
</comment>
<comment type="pathway">
    <text evidence="1">Glycolipid biosynthesis; lipid IV(A) biosynthesis; lipid IV(A) from (3R)-3-hydroxytetradecanoyl-[acyl-carrier-protein] and UDP-N-acetyl-alpha-D-glucosamine: step 4/6.</text>
</comment>
<comment type="subcellular location">
    <subcellularLocation>
        <location evidence="1">Cell inner membrane</location>
        <topology evidence="1">Peripheral membrane protein</topology>
        <orientation evidence="1">Cytoplasmic side</orientation>
    </subcellularLocation>
</comment>
<comment type="similarity">
    <text evidence="1">Belongs to the LpxH family.</text>
</comment>
<reference key="1">
    <citation type="journal article" date="2006" name="Mol. Microbiol.">
        <title>Role of pathogenicity island-associated integrases in the genome plasticity of uropathogenic Escherichia coli strain 536.</title>
        <authorList>
            <person name="Hochhut B."/>
            <person name="Wilde C."/>
            <person name="Balling G."/>
            <person name="Middendorf B."/>
            <person name="Dobrindt U."/>
            <person name="Brzuszkiewicz E."/>
            <person name="Gottschalk G."/>
            <person name="Carniel E."/>
            <person name="Hacker J."/>
        </authorList>
    </citation>
    <scope>NUCLEOTIDE SEQUENCE [LARGE SCALE GENOMIC DNA]</scope>
    <source>
        <strain>536 / UPEC</strain>
    </source>
</reference>
<accession>Q0TKB7</accession>
<gene>
    <name evidence="1" type="primary">lpxH</name>
    <name type="ordered locus">ECP_0585</name>
</gene>
<organism>
    <name type="scientific">Escherichia coli O6:K15:H31 (strain 536 / UPEC)</name>
    <dbReference type="NCBI Taxonomy" id="362663"/>
    <lineage>
        <taxon>Bacteria</taxon>
        <taxon>Pseudomonadati</taxon>
        <taxon>Pseudomonadota</taxon>
        <taxon>Gammaproteobacteria</taxon>
        <taxon>Enterobacterales</taxon>
        <taxon>Enterobacteriaceae</taxon>
        <taxon>Escherichia</taxon>
    </lineage>
</organism>
<sequence length="240" mass="26879">MATLFIADLHLCVEEPAITAGFLRFLAGEARKADALYILGDLFEAWIGDDDPNPLHHQMAAAIKAVSDSGVPCYFIHGNRDFLLGKRFARESGMTLLPEEKVLELYGRRVLIMHGDTLCTDDAGYQAFRAKVHKPWLQTLFLALPLFVRKRIAARMRANSKEANSSKSLAIMDVNQNAVVSAMEKHQVQWLIHGHTHRPAVHELIANQQTAFRVVLGAWHTEGSMVKVTADDVELIHFPF</sequence>
<keyword id="KW-0997">Cell inner membrane</keyword>
<keyword id="KW-1003">Cell membrane</keyword>
<keyword id="KW-0378">Hydrolase</keyword>
<keyword id="KW-0441">Lipid A biosynthesis</keyword>
<keyword id="KW-0444">Lipid biosynthesis</keyword>
<keyword id="KW-0443">Lipid metabolism</keyword>
<keyword id="KW-0464">Manganese</keyword>
<keyword id="KW-0472">Membrane</keyword>
<keyword id="KW-0479">Metal-binding</keyword>
<evidence type="ECO:0000255" key="1">
    <source>
        <dbReference type="HAMAP-Rule" id="MF_00575"/>
    </source>
</evidence>
<name>LPXH_ECOL5</name>